<comment type="function">
    <text evidence="1 3 4">A tubulin-like, filament forming GTPase; the motor component of the type III partition system presumably used to ensure correct segregation of this bacteriophage. In the presence of Mg(2+) and GTP (or GTP-gamma-S) assembles into filaments which upon polymerization are almost exclusively bound to GDP. Filament formation is cooperative, requiring a critical concentration. Formation occurs very quickly and is followed by disassembly as GTP is consumed. Unlike its plasmid homolog in B.thuringiensis (AC Q8KNP3) GTP-gamma-S does not alter filament formation (PubMed:22538818, PubMed:28230082). When forced to assemble with GDP instead of GTP it makes much stiffer, thicker filaments (PubMed:28230082). The filaments bind a DNA centromere-like site (tubC)-TubR complex which extends to surround the TubZ filaments (PubMed:22538818). Highly dynamic filaments grow at the plus end and depolymerize at the minus end, a process called treadmilling. TubR-tubC complexes track the depolymerizing minus end of the filament, probably pulling phage DNA within the cell (By similarity).</text>
</comment>
<comment type="catalytic activity">
    <reaction evidence="3 4">
        <text>GTP + H2O = GDP + phosphate + H(+)</text>
        <dbReference type="Rhea" id="RHEA:19669"/>
        <dbReference type="ChEBI" id="CHEBI:15377"/>
        <dbReference type="ChEBI" id="CHEBI:15378"/>
        <dbReference type="ChEBI" id="CHEBI:37565"/>
        <dbReference type="ChEBI" id="CHEBI:43474"/>
        <dbReference type="ChEBI" id="CHEBI:58189"/>
    </reaction>
</comment>
<comment type="subunit">
    <text evidence="3 4">Monomer. In the presence of Mg(2+) and GTP assembles into 2-stranded filaments which coalesce into bundles. Binds a centromere-like site (tubC)-TubR complex. The TubZ-TubR-tubC complex bind to TubY which reshapes the filament bundles into rings (PubMed:22538818). A later paper by the same group shows 4-stranded filament formation and suggests the 2-stranded form is a short-lived intermediate (PubMed:28230082).</text>
</comment>
<comment type="subcellular location">
    <subcellularLocation>
        <location evidence="6">Host cytoplasm</location>
    </subcellularLocation>
    <text evidence="3 4">Forms long dynamic filaments.</text>
</comment>
<comment type="domain">
    <text evidence="4 7">Consists of two domains: a nucleotide-binding N-terminus that hydrolyzes GTP and a C-terminus domain necessary for polymerization. The domains are bridged by a long, central helix (PubMed:28230082). The C-terminus is thought to insert into the most distant monomer of the plus end of the filament, forming the complete active site and modulating filament assembly (Probable).</text>
</comment>
<comment type="miscellaneous">
    <text evidence="2">This bacteriophage also exists as a circular plasmid prophage in its host.</text>
</comment>
<comment type="similarity">
    <text evidence="6">Belongs to the FtsZ family. TubZ subfamily.</text>
</comment>
<keyword id="KW-0002">3D-structure</keyword>
<keyword id="KW-0342">GTP-binding</keyword>
<keyword id="KW-1035">Host cytoplasm</keyword>
<keyword id="KW-0378">Hydrolase</keyword>
<keyword id="KW-0547">Nucleotide-binding</keyword>
<keyword id="KW-0616">Plasmid partition</keyword>
<keyword id="KW-1185">Reference proteome</keyword>
<evidence type="ECO:0000250" key="1">
    <source>
        <dbReference type="UniProtKB" id="Q8KNP3"/>
    </source>
</evidence>
<evidence type="ECO:0000269" key="2">
    <source>
    </source>
</evidence>
<evidence type="ECO:0000269" key="3">
    <source>
    </source>
</evidence>
<evidence type="ECO:0000269" key="4">
    <source>
    </source>
</evidence>
<evidence type="ECO:0000303" key="5">
    <source>
    </source>
</evidence>
<evidence type="ECO:0000305" key="6"/>
<evidence type="ECO:0000305" key="7">
    <source>
    </source>
</evidence>
<evidence type="ECO:0007744" key="8">
    <source>
        <dbReference type="PDB" id="3V3T"/>
    </source>
</evidence>
<evidence type="ECO:0007744" key="9">
    <source>
        <dbReference type="PDB" id="4XCQ"/>
    </source>
</evidence>
<evidence type="ECO:0007829" key="10">
    <source>
        <dbReference type="PDB" id="3V3T"/>
    </source>
</evidence>
<proteinExistence type="evidence at protein level"/>
<protein>
    <recommendedName>
        <fullName evidence="5">Tubulin-like protein TubZ</fullName>
        <ecNumber evidence="3">3.6.5.-</ecNumber>
    </recommendedName>
    <alternativeName>
        <fullName evidence="5">Tubulin/FtsZ-like protein TubZ</fullName>
    </alternativeName>
</protein>
<organism>
    <name type="scientific">Clostridium botulinum C phage</name>
    <name type="common">Clostridium botulinum C bacteriophage</name>
    <dbReference type="NCBI Taxonomy" id="12336"/>
    <lineage>
        <taxon>Viruses</taxon>
        <taxon>Duplodnaviria</taxon>
        <taxon>Heunggongvirae</taxon>
        <taxon>Uroviricota</taxon>
        <taxon>Caudoviricetes</taxon>
    </lineage>
</organism>
<sequence length="358" mass="40209">MKNKIVFAPIGQGGGNIVDTLLGICGDYNALFINTSKKDLDSLKHAKHTYHIPYAEGCGKERKKAVGYAQTYYKQIIAQIMEKFSSCDIVIFVATMAGGTGSGITPPILGLAKQMYPNKHFGFVGVLPKATEDIDEHMNAIACWNDIMRSTNEGKDISIYLLDNNKREKESDINKEFATLFNDFMNMSESHAEGVVDEDEISKLLTMKKSNVILEFDDKEDIQVALAKSLKESIFAEYTTNTCEFMGISTTRVVDVEAIKSIVGYPRRTFKGYNSKKNIVVATGIEPQKTTVQMMNEIIEDKMKQRREVTSKSENMIIEPIALDDEDNKSVISSNEKEISIDNVEKEIDINDFFSKYM</sequence>
<feature type="chain" id="PRO_0000448564" description="Tubulin-like protein TubZ">
    <location>
        <begin position="1"/>
        <end position="358"/>
    </location>
</feature>
<feature type="binding site" evidence="9">
    <location>
        <begin position="12"/>
        <end position="16"/>
    </location>
    <ligand>
        <name>GDP</name>
        <dbReference type="ChEBI" id="CHEBI:58189"/>
    </ligand>
</feature>
<feature type="binding site" evidence="9">
    <location>
        <position position="95"/>
    </location>
    <ligand>
        <name>GDP</name>
        <dbReference type="ChEBI" id="CHEBI:58189"/>
    </ligand>
</feature>
<feature type="binding site" evidence="9">
    <location>
        <begin position="99"/>
        <end position="101"/>
    </location>
    <ligand>
        <name>GDP</name>
        <dbReference type="ChEBI" id="CHEBI:58189"/>
    </ligand>
</feature>
<feature type="binding site" evidence="9">
    <location>
        <position position="132"/>
    </location>
    <ligand>
        <name>GDP</name>
        <dbReference type="ChEBI" id="CHEBI:58189"/>
    </ligand>
</feature>
<feature type="binding site" evidence="9">
    <location>
        <position position="164"/>
    </location>
    <ligand>
        <name>GDP</name>
        <dbReference type="ChEBI" id="CHEBI:58189"/>
    </ligand>
</feature>
<feature type="binding site" evidence="9">
    <location>
        <position position="170"/>
    </location>
    <ligand>
        <name>GDP</name>
        <dbReference type="ChEBI" id="CHEBI:58189"/>
    </ligand>
</feature>
<feature type="binding site" evidence="9">
    <location>
        <position position="174"/>
    </location>
    <ligand>
        <name>GDP</name>
        <dbReference type="ChEBI" id="CHEBI:58189"/>
    </ligand>
</feature>
<feature type="binding site" evidence="1">
    <location>
        <position position="182"/>
    </location>
    <ligand>
        <name>GTP</name>
        <dbReference type="ChEBI" id="CHEBI:37565"/>
    </ligand>
</feature>
<feature type="mutagenesis site" description="Reduced GTPase activity, lower critical concentration value, filaments are more stable, forms more stable crystals. More 2-stranded filaments are seen than with wild-type, interacts normally with TubY." evidence="3 4">
    <original>T</original>
    <variation>A</variation>
    <location>
        <position position="100"/>
    </location>
</feature>
<feature type="mutagenesis site" description="Reduced GTPase activity, lower critical concentration value, filaments are much more stable. More 2-stranded filaments are seen than with wild-type." evidence="3 4">
    <original>E</original>
    <variation>A</variation>
    <location>
        <position position="200"/>
    </location>
</feature>
<feature type="mutagenesis site" description="Polymerizes at higher cricital concentration, binds GTP normally, has no GTPase activity, interacts with TubY." evidence="4">
    <location>
        <begin position="317"/>
        <end position="358"/>
    </location>
</feature>
<feature type="mutagenesis site" description="Polymerizes at higher cricital concentration, binds GTP normally, has almost no GTPase activity, interacts with TubY. In the presence of GDP and TubY forms rings." evidence="4">
    <location>
        <begin position="350"/>
        <end position="358"/>
    </location>
</feature>
<feature type="helix" evidence="10">
    <location>
        <begin position="2"/>
        <end position="4"/>
    </location>
</feature>
<feature type="strand" evidence="10">
    <location>
        <begin position="5"/>
        <end position="11"/>
    </location>
</feature>
<feature type="helix" evidence="10">
    <location>
        <begin position="12"/>
        <end position="24"/>
    </location>
</feature>
<feature type="strand" evidence="10">
    <location>
        <begin position="28"/>
        <end position="30"/>
    </location>
</feature>
<feature type="strand" evidence="10">
    <location>
        <begin position="32"/>
        <end position="35"/>
    </location>
</feature>
<feature type="helix" evidence="10">
    <location>
        <begin position="37"/>
        <end position="41"/>
    </location>
</feature>
<feature type="strand" evidence="10">
    <location>
        <begin position="49"/>
        <end position="51"/>
    </location>
</feature>
<feature type="helix" evidence="10">
    <location>
        <begin position="62"/>
        <end position="69"/>
    </location>
</feature>
<feature type="helix" evidence="10">
    <location>
        <begin position="70"/>
        <end position="72"/>
    </location>
</feature>
<feature type="helix" evidence="10">
    <location>
        <begin position="73"/>
        <end position="83"/>
    </location>
</feature>
<feature type="turn" evidence="10">
    <location>
        <begin position="84"/>
        <end position="86"/>
    </location>
</feature>
<feature type="strand" evidence="10">
    <location>
        <begin position="88"/>
        <end position="95"/>
    </location>
</feature>
<feature type="helix" evidence="10">
    <location>
        <begin position="99"/>
        <end position="115"/>
    </location>
</feature>
<feature type="strand" evidence="10">
    <location>
        <begin position="119"/>
        <end position="127"/>
    </location>
</feature>
<feature type="helix" evidence="10">
    <location>
        <begin position="134"/>
        <end position="150"/>
    </location>
</feature>
<feature type="turn" evidence="10">
    <location>
        <begin position="151"/>
        <end position="155"/>
    </location>
</feature>
<feature type="strand" evidence="10">
    <location>
        <begin position="156"/>
        <end position="163"/>
    </location>
</feature>
<feature type="helix" evidence="10">
    <location>
        <begin position="164"/>
        <end position="166"/>
    </location>
</feature>
<feature type="strand" evidence="10">
    <location>
        <begin position="167"/>
        <end position="169"/>
    </location>
</feature>
<feature type="helix" evidence="10">
    <location>
        <begin position="170"/>
        <end position="185"/>
    </location>
</feature>
<feature type="helix" evidence="10">
    <location>
        <begin position="186"/>
        <end position="188"/>
    </location>
</feature>
<feature type="helix" evidence="10">
    <location>
        <begin position="198"/>
        <end position="206"/>
    </location>
</feature>
<feature type="strand" evidence="10">
    <location>
        <begin position="209"/>
        <end position="215"/>
    </location>
</feature>
<feature type="strand" evidence="10">
    <location>
        <begin position="218"/>
        <end position="220"/>
    </location>
</feature>
<feature type="helix" evidence="10">
    <location>
        <begin position="222"/>
        <end position="231"/>
    </location>
</feature>
<feature type="strand" evidence="10">
    <location>
        <begin position="244"/>
        <end position="252"/>
    </location>
</feature>
<feature type="helix" evidence="10">
    <location>
        <begin position="256"/>
        <end position="263"/>
    </location>
</feature>
<feature type="strand" evidence="10">
    <location>
        <begin position="267"/>
        <end position="273"/>
    </location>
</feature>
<feature type="strand" evidence="10">
    <location>
        <begin position="279"/>
        <end position="285"/>
    </location>
</feature>
<feature type="helix" evidence="10">
    <location>
        <begin position="289"/>
        <end position="304"/>
    </location>
</feature>
<accession>Q331T7</accession>
<gene>
    <name evidence="5" type="primary">tubZ</name>
    <name type="ORF">CST189</name>
</gene>
<name>TUBZ_CBCP</name>
<organismHost>
    <name type="scientific">Clostridium botulinum C</name>
    <dbReference type="NCBI Taxonomy" id="36828"/>
</organismHost>
<dbReference type="EC" id="3.6.5.-" evidence="3"/>
<dbReference type="EMBL" id="AP008983">
    <property type="protein sequence ID" value="BAE47887.1"/>
    <property type="molecule type" value="Genomic_DNA"/>
</dbReference>
<dbReference type="RefSeq" id="YP_398619.1">
    <property type="nucleotide sequence ID" value="NC_007581.1"/>
</dbReference>
<dbReference type="PDB" id="3V3T">
    <property type="method" value="X-ray"/>
    <property type="resolution" value="2.30 A"/>
    <property type="chains" value="A=1-358"/>
</dbReference>
<dbReference type="PDB" id="4XCQ">
    <property type="method" value="X-ray"/>
    <property type="resolution" value="2.39 A"/>
    <property type="chains" value="A=1-316"/>
</dbReference>
<dbReference type="PDBsum" id="3V3T"/>
<dbReference type="PDBsum" id="4XCQ"/>
<dbReference type="SMR" id="Q331T7"/>
<dbReference type="GeneID" id="3772975"/>
<dbReference type="KEGG" id="vg:3772975"/>
<dbReference type="EvolutionaryTrace" id="Q331T7"/>
<dbReference type="Proteomes" id="UP000001240">
    <property type="component" value="Segment"/>
</dbReference>
<dbReference type="GO" id="GO:0030430">
    <property type="term" value="C:host cell cytoplasm"/>
    <property type="evidence" value="ECO:0007669"/>
    <property type="project" value="UniProtKB-SubCell"/>
</dbReference>
<dbReference type="GO" id="GO:0005525">
    <property type="term" value="F:GTP binding"/>
    <property type="evidence" value="ECO:0007669"/>
    <property type="project" value="UniProtKB-KW"/>
</dbReference>
<dbReference type="GO" id="GO:0003924">
    <property type="term" value="F:GTPase activity"/>
    <property type="evidence" value="ECO:0007669"/>
    <property type="project" value="RHEA"/>
</dbReference>
<dbReference type="GO" id="GO:0007017">
    <property type="term" value="P:microtubule-based process"/>
    <property type="evidence" value="ECO:0007669"/>
    <property type="project" value="InterPro"/>
</dbReference>
<dbReference type="GO" id="GO:0030541">
    <property type="term" value="P:plasmid partitioning"/>
    <property type="evidence" value="ECO:0007669"/>
    <property type="project" value="UniProtKB-KW"/>
</dbReference>
<dbReference type="Gene3D" id="3.30.1330.150">
    <property type="match status" value="1"/>
</dbReference>
<dbReference type="Gene3D" id="3.40.50.1440">
    <property type="entry name" value="Tubulin/FtsZ, GTPase domain"/>
    <property type="match status" value="1"/>
</dbReference>
<dbReference type="InterPro" id="IPR036525">
    <property type="entry name" value="Tubulin/FtsZ_GTPase_sf"/>
</dbReference>
<dbReference type="InterPro" id="IPR017975">
    <property type="entry name" value="Tubulin_CS"/>
</dbReference>
<dbReference type="InterPro" id="IPR003008">
    <property type="entry name" value="Tubulin_FtsZ_GTPase"/>
</dbReference>
<dbReference type="InterPro" id="IPR054756">
    <property type="entry name" value="TubZ_C_clostridia"/>
</dbReference>
<dbReference type="Pfam" id="PF00091">
    <property type="entry name" value="Tubulin"/>
    <property type="match status" value="1"/>
</dbReference>
<dbReference type="Pfam" id="PF22340">
    <property type="entry name" value="TubZ_C_3"/>
    <property type="match status" value="1"/>
</dbReference>
<dbReference type="SMART" id="SM00864">
    <property type="entry name" value="Tubulin"/>
    <property type="match status" value="1"/>
</dbReference>
<dbReference type="SUPFAM" id="SSF52490">
    <property type="entry name" value="Tubulin nucleotide-binding domain-like"/>
    <property type="match status" value="1"/>
</dbReference>
<dbReference type="PROSITE" id="PS00227">
    <property type="entry name" value="TUBULIN"/>
    <property type="match status" value="1"/>
</dbReference>
<reference key="1">
    <citation type="journal article" date="2005" name="Proc. Natl. Acad. Sci. U.S.A.">
        <title>The genome sequence of Clostridium botulinum type C neurotoxin-converting phage and the molecular mechanisms of unstable lysogeny.</title>
        <authorList>
            <person name="Sakaguchi Y."/>
            <person name="Hayashi T."/>
            <person name="Kurokawa K."/>
            <person name="Nakayama K."/>
            <person name="Oshima K."/>
            <person name="Fujinaga Y."/>
            <person name="Ohnishi M."/>
            <person name="Ohtsubo E."/>
            <person name="Hattori M."/>
            <person name="Oguma K."/>
        </authorList>
    </citation>
    <scope>NUCLEOTIDE SEQUENCE [LARGE SCALE GENOMIC DNA]</scope>
    <source>
        <strain>Clostridium phage c-st</strain>
    </source>
</reference>
<reference evidence="8" key="2">
    <citation type="journal article" date="2012" name="Proc. Natl. Acad. Sci. U.S.A.">
        <title>Tubulin homolog TubZ in a phage-encoded partition system.</title>
        <authorList>
            <person name="Oliva M.A."/>
            <person name="Martin-Galiano A.J."/>
            <person name="Sakaguchi Y."/>
            <person name="Andreu J.M."/>
        </authorList>
    </citation>
    <scope>X-RAY CRYSTALLOGRAPHY (2.30 ANGSTROMS)</scope>
    <scope>FUNCTION</scope>
    <scope>CATALYTIC ACTIVITY</scope>
    <scope>SUBUNIT</scope>
    <scope>FILAMENT FORMATION</scope>
    <scope>MUTAGENESIS OF THR-100 AND GLU-200</scope>
    <source>
        <strain>Clostridium phage c-st</strain>
    </source>
</reference>
<reference evidence="9" key="3">
    <citation type="journal article" date="2017" name="Sci. Rep.">
        <title>TubZ filament assembly dynamics requires the flexible C-terminal tail.</title>
        <authorList>
            <person name="Fuentes-Perez M.E."/>
            <person name="Nunez-Ramirez R."/>
            <person name="Martin-Gonzalez A."/>
            <person name="Juan-Rodriguez D."/>
            <person name="Llorca O."/>
            <person name="Moreno-Herrero F."/>
            <person name="Oliva M.A."/>
        </authorList>
    </citation>
    <scope>X-RAY CRYSTALLOGRAPHY (2.39 ANGSTROMS) OF 1-316 IN COMPLEX WITH GDP</scope>
    <scope>FUNCTION</scope>
    <scope>SUBUNIT</scope>
    <scope>FILAMENT FORMATION</scope>
    <scope>MUTAGENESIS OF THR-100; GLU-200; 317-ILE--MET-358 AND 350-ILE--MET-358</scope>
    <source>
        <strain>Clostridium phage c-st</strain>
    </source>
</reference>